<reference key="1">
    <citation type="journal article" date="2004" name="Proc. Natl. Acad. Sci. U.S.A.">
        <title>Structural flexibility in the Burkholderia mallei genome.</title>
        <authorList>
            <person name="Nierman W.C."/>
            <person name="DeShazer D."/>
            <person name="Kim H.S."/>
            <person name="Tettelin H."/>
            <person name="Nelson K.E."/>
            <person name="Feldblyum T.V."/>
            <person name="Ulrich R.L."/>
            <person name="Ronning C.M."/>
            <person name="Brinkac L.M."/>
            <person name="Daugherty S.C."/>
            <person name="Davidsen T.D."/>
            <person name="DeBoy R.T."/>
            <person name="Dimitrov G."/>
            <person name="Dodson R.J."/>
            <person name="Durkin A.S."/>
            <person name="Gwinn M.L."/>
            <person name="Haft D.H."/>
            <person name="Khouri H.M."/>
            <person name="Kolonay J.F."/>
            <person name="Madupu R."/>
            <person name="Mohammoud Y."/>
            <person name="Nelson W.C."/>
            <person name="Radune D."/>
            <person name="Romero C.M."/>
            <person name="Sarria S."/>
            <person name="Selengut J."/>
            <person name="Shamblin C."/>
            <person name="Sullivan S.A."/>
            <person name="White O."/>
            <person name="Yu Y."/>
            <person name="Zafar N."/>
            <person name="Zhou L."/>
            <person name="Fraser C.M."/>
        </authorList>
    </citation>
    <scope>NUCLEOTIDE SEQUENCE [LARGE SCALE GENOMIC DNA]</scope>
    <source>
        <strain>ATCC 23344</strain>
    </source>
</reference>
<evidence type="ECO:0000255" key="1">
    <source>
        <dbReference type="HAMAP-Rule" id="MF_01102"/>
    </source>
</evidence>
<evidence type="ECO:0000305" key="2"/>
<proteinExistence type="inferred from homology"/>
<protein>
    <recommendedName>
        <fullName evidence="1">tRNA 5-methylaminomethyl-2-thiouridine biosynthesis bifunctional protein MnmC</fullName>
        <shortName evidence="1">tRNA mnm(5)s(2)U biosynthesis bifunctional protein</shortName>
    </recommendedName>
    <domain>
        <recommendedName>
            <fullName evidence="1">tRNA (mnm(5)s(2)U34)-methyltransferase</fullName>
            <ecNumber evidence="1">2.1.1.61</ecNumber>
        </recommendedName>
    </domain>
    <domain>
        <recommendedName>
            <fullName evidence="1">FAD-dependent cmnm(5)s(2)U34 oxidoreductase</fullName>
            <ecNumber evidence="1">1.5.-.-</ecNumber>
        </recommendedName>
    </domain>
</protein>
<dbReference type="EC" id="2.1.1.61" evidence="1"/>
<dbReference type="EC" id="1.5.-.-" evidence="1"/>
<dbReference type="EMBL" id="CP000010">
    <property type="protein sequence ID" value="AAU47992.1"/>
    <property type="status" value="ALT_INIT"/>
    <property type="molecule type" value="Genomic_DNA"/>
</dbReference>
<dbReference type="RefSeq" id="WP_011204185.1">
    <property type="nucleotide sequence ID" value="NC_006348.1"/>
</dbReference>
<dbReference type="RefSeq" id="YP_104421.2">
    <property type="nucleotide sequence ID" value="NC_006348.1"/>
</dbReference>
<dbReference type="SMR" id="Q62FV6"/>
<dbReference type="GeneID" id="92980584"/>
<dbReference type="KEGG" id="bma:BMA2914"/>
<dbReference type="PATRIC" id="fig|243160.12.peg.2985"/>
<dbReference type="eggNOG" id="COG0665">
    <property type="taxonomic scope" value="Bacteria"/>
</dbReference>
<dbReference type="eggNOG" id="COG4121">
    <property type="taxonomic scope" value="Bacteria"/>
</dbReference>
<dbReference type="HOGENOM" id="CLU_022427_1_0_4"/>
<dbReference type="Proteomes" id="UP000006693">
    <property type="component" value="Chromosome 1"/>
</dbReference>
<dbReference type="GO" id="GO:0005737">
    <property type="term" value="C:cytoplasm"/>
    <property type="evidence" value="ECO:0007669"/>
    <property type="project" value="UniProtKB-SubCell"/>
</dbReference>
<dbReference type="GO" id="GO:0050660">
    <property type="term" value="F:flavin adenine dinucleotide binding"/>
    <property type="evidence" value="ECO:0007669"/>
    <property type="project" value="UniProtKB-UniRule"/>
</dbReference>
<dbReference type="GO" id="GO:0016645">
    <property type="term" value="F:oxidoreductase activity, acting on the CH-NH group of donors"/>
    <property type="evidence" value="ECO:0007669"/>
    <property type="project" value="InterPro"/>
</dbReference>
<dbReference type="GO" id="GO:0004808">
    <property type="term" value="F:tRNA (5-methylaminomethyl-2-thiouridylate)(34)-methyltransferase activity"/>
    <property type="evidence" value="ECO:0007669"/>
    <property type="project" value="UniProtKB-EC"/>
</dbReference>
<dbReference type="GO" id="GO:0032259">
    <property type="term" value="P:methylation"/>
    <property type="evidence" value="ECO:0007669"/>
    <property type="project" value="UniProtKB-KW"/>
</dbReference>
<dbReference type="GO" id="GO:0002097">
    <property type="term" value="P:tRNA wobble base modification"/>
    <property type="evidence" value="ECO:0007669"/>
    <property type="project" value="UniProtKB-UniRule"/>
</dbReference>
<dbReference type="Gene3D" id="3.30.9.10">
    <property type="entry name" value="D-Amino Acid Oxidase, subunit A, domain 2"/>
    <property type="match status" value="1"/>
</dbReference>
<dbReference type="Gene3D" id="3.50.50.60">
    <property type="entry name" value="FAD/NAD(P)-binding domain"/>
    <property type="match status" value="1"/>
</dbReference>
<dbReference type="Gene3D" id="3.40.50.150">
    <property type="entry name" value="Vaccinia Virus protein VP39"/>
    <property type="match status" value="1"/>
</dbReference>
<dbReference type="HAMAP" id="MF_01102">
    <property type="entry name" value="MnmC"/>
    <property type="match status" value="1"/>
</dbReference>
<dbReference type="InterPro" id="IPR006076">
    <property type="entry name" value="FAD-dep_OxRdtase"/>
</dbReference>
<dbReference type="InterPro" id="IPR036188">
    <property type="entry name" value="FAD/NAD-bd_sf"/>
</dbReference>
<dbReference type="InterPro" id="IPR008471">
    <property type="entry name" value="MnmC-like_methylTransf"/>
</dbReference>
<dbReference type="InterPro" id="IPR029063">
    <property type="entry name" value="SAM-dependent_MTases_sf"/>
</dbReference>
<dbReference type="InterPro" id="IPR023032">
    <property type="entry name" value="tRNA_MAMT_biosynth_bifunc_MnmC"/>
</dbReference>
<dbReference type="InterPro" id="IPR047785">
    <property type="entry name" value="tRNA_MNMC2"/>
</dbReference>
<dbReference type="InterPro" id="IPR017610">
    <property type="entry name" value="tRNA_S-uridine_synth_MnmC_C"/>
</dbReference>
<dbReference type="NCBIfam" id="TIGR03197">
    <property type="entry name" value="MnmC_Cterm"/>
    <property type="match status" value="1"/>
</dbReference>
<dbReference type="NCBIfam" id="NF002481">
    <property type="entry name" value="PRK01747.1-2"/>
    <property type="match status" value="1"/>
</dbReference>
<dbReference type="NCBIfam" id="NF002483">
    <property type="entry name" value="PRK01747.1-4"/>
    <property type="match status" value="1"/>
</dbReference>
<dbReference type="NCBIfam" id="NF033855">
    <property type="entry name" value="tRNA_MNMC2"/>
    <property type="match status" value="1"/>
</dbReference>
<dbReference type="PANTHER" id="PTHR13847">
    <property type="entry name" value="SARCOSINE DEHYDROGENASE-RELATED"/>
    <property type="match status" value="1"/>
</dbReference>
<dbReference type="PANTHER" id="PTHR13847:SF283">
    <property type="entry name" value="TRNA 5-METHYLAMINOMETHYL-2-THIOURIDINE BIOSYNTHESIS BIFUNCTIONAL PROTEIN MNMC"/>
    <property type="match status" value="1"/>
</dbReference>
<dbReference type="Pfam" id="PF01266">
    <property type="entry name" value="DAO"/>
    <property type="match status" value="1"/>
</dbReference>
<dbReference type="Pfam" id="PF05430">
    <property type="entry name" value="Methyltransf_30"/>
    <property type="match status" value="1"/>
</dbReference>
<dbReference type="SUPFAM" id="SSF54373">
    <property type="entry name" value="FAD-linked reductases, C-terminal domain"/>
    <property type="match status" value="1"/>
</dbReference>
<dbReference type="SUPFAM" id="SSF51905">
    <property type="entry name" value="FAD/NAD(P)-binding domain"/>
    <property type="match status" value="1"/>
</dbReference>
<comment type="function">
    <text evidence="1">Catalyzes the last two steps in the biosynthesis of 5-methylaminomethyl-2-thiouridine (mnm(5)s(2)U) at the wobble position (U34) in tRNA. Catalyzes the FAD-dependent demodification of cmnm(5)s(2)U34 to nm(5)s(2)U34, followed by the transfer of a methyl group from S-adenosyl-L-methionine to nm(5)s(2)U34, to form mnm(5)s(2)U34.</text>
</comment>
<comment type="catalytic activity">
    <reaction evidence="1">
        <text>5-aminomethyl-2-thiouridine(34) in tRNA + S-adenosyl-L-methionine = 5-methylaminomethyl-2-thiouridine(34) in tRNA + S-adenosyl-L-homocysteine + H(+)</text>
        <dbReference type="Rhea" id="RHEA:19569"/>
        <dbReference type="Rhea" id="RHEA-COMP:10195"/>
        <dbReference type="Rhea" id="RHEA-COMP:10197"/>
        <dbReference type="ChEBI" id="CHEBI:15378"/>
        <dbReference type="ChEBI" id="CHEBI:57856"/>
        <dbReference type="ChEBI" id="CHEBI:59789"/>
        <dbReference type="ChEBI" id="CHEBI:74454"/>
        <dbReference type="ChEBI" id="CHEBI:74455"/>
        <dbReference type="EC" id="2.1.1.61"/>
    </reaction>
</comment>
<comment type="cofactor">
    <cofactor evidence="1">
        <name>FAD</name>
        <dbReference type="ChEBI" id="CHEBI:57692"/>
    </cofactor>
</comment>
<comment type="subcellular location">
    <subcellularLocation>
        <location evidence="1">Cytoplasm</location>
    </subcellularLocation>
</comment>
<comment type="similarity">
    <text evidence="1">In the N-terminal section; belongs to the methyltransferase superfamily. tRNA (mnm(5)s(2)U34)-methyltransferase family.</text>
</comment>
<comment type="similarity">
    <text evidence="1">In the C-terminal section; belongs to the DAO family.</text>
</comment>
<comment type="sequence caution" evidence="2">
    <conflict type="erroneous initiation">
        <sequence resource="EMBL-CDS" id="AAU47992"/>
    </conflict>
</comment>
<gene>
    <name evidence="1" type="primary">mnmC</name>
    <name type="ordered locus">BMA2914</name>
</gene>
<feature type="chain" id="PRO_0000347952" description="tRNA 5-methylaminomethyl-2-thiouridine biosynthesis bifunctional protein MnmC">
    <location>
        <begin position="1"/>
        <end position="660"/>
    </location>
</feature>
<feature type="region of interest" description="tRNA (mnm(5)s(2)U34)-methyltransferase">
    <location>
        <begin position="1"/>
        <end position="242"/>
    </location>
</feature>
<feature type="region of interest" description="FAD-dependent cmnm(5)s(2)U34 oxidoreductase">
    <location>
        <begin position="266"/>
        <end position="660"/>
    </location>
</feature>
<keyword id="KW-0963">Cytoplasm</keyword>
<keyword id="KW-0274">FAD</keyword>
<keyword id="KW-0285">Flavoprotein</keyword>
<keyword id="KW-0489">Methyltransferase</keyword>
<keyword id="KW-0511">Multifunctional enzyme</keyword>
<keyword id="KW-0560">Oxidoreductase</keyword>
<keyword id="KW-1185">Reference proteome</keyword>
<keyword id="KW-0949">S-adenosyl-L-methionine</keyword>
<keyword id="KW-0808">Transferase</keyword>
<keyword id="KW-0819">tRNA processing</keyword>
<name>MNMC_BURMA</name>
<organism>
    <name type="scientific">Burkholderia mallei (strain ATCC 23344)</name>
    <dbReference type="NCBI Taxonomy" id="243160"/>
    <lineage>
        <taxon>Bacteria</taxon>
        <taxon>Pseudomonadati</taxon>
        <taxon>Pseudomonadota</taxon>
        <taxon>Betaproteobacteria</taxon>
        <taxon>Burkholderiales</taxon>
        <taxon>Burkholderiaceae</taxon>
        <taxon>Burkholderia</taxon>
        <taxon>pseudomallei group</taxon>
    </lineage>
</organism>
<sequence>MTDRIVPATLVFREDGTVVSPLYGDIYHSAAGALAQADHVFIRGNGLPERWRHERAFTIIETGFGTGCNFLATWAAWRADPSHCERLHFVSVEKHPFAREDLRRAAAHIVAYTTITTITPIAPLVDELANAWPALTPGVHRLEFDDGRVTLTLVFGDALDVLPNLALRAHAFYLDGFAPSKNADLWSPAIFKSLAKLADERATFATYTSSGAVKRALDEAGFAYRKVDGFAGKRAMLVGEFAPRWRVRRHEPPRAFSTDRRDAIVIGAGLAGCAVVERLAARGWHVTLIERRERIASEASGNPAGVFHPMIARDDNLAARLSRAGFLHALHRWRALERAGHAFSRSTHGLVQLATSDDEFERMRESIDALGVPAELASALSRDDARALLRTDVAHGGWLFAQGGSISPATLAAAQCAAAGDRLSRIVGVEIARLERGGDGRWRALDASGATIAQASVVVVANAADAARIAGLRHAPTQRVRGQLTLLPPGSAPAVPLPVIGDGYVVPLANGVTLTGATYEPDDTDATPREAGHRENLERLERLLPAFSANALDAGALAGRVGFRCVASDRLPLVGELGDEAAAAREAAALTGARLRDVPRATGLYGAFGYGSRGLVWAALGAELIAAQIDGEPWPLERELAEAIDPARFLVRALRHGRVA</sequence>
<accession>Q62FV6</accession>